<sequence length="315" mass="34841">MRKRARIIYNPTSGKEQFKRELPDALIKLEKAGYETSAYATEKIGDATLEAERAMHENYDVLIAAGGDGTLNEVVNGIAEKPNRPKLGVIPMGTVNDFGRALHIPNDIMGALDVIIEGHSTKVDIGKMNNRYFINLAAGGQLTQVSYETPSKLKSIVGPFAYYIKGFEMLPQMKAVDLRIEYDGNVFQGEALLFFLGLTNSMAGFEKLVPDAKLDDGYFTLIIVEKSNLAELGHIMTLASRGEHTKHPKVIYEKAKAINISSLTDLQLNVDGEYGGKLPANFLNLERHIDVFAPNDIVNEELISNDHVDDNLIEE</sequence>
<feature type="chain" id="PRO_0000386490" description="Diacylglycerol kinase">
    <location>
        <begin position="1"/>
        <end position="315"/>
    </location>
</feature>
<feature type="domain" description="DAGKc" evidence="2">
    <location>
        <begin position="1"/>
        <end position="132"/>
    </location>
</feature>
<feature type="active site" description="Proton acceptor" evidence="1">
    <location>
        <position position="273"/>
    </location>
</feature>
<feature type="binding site" evidence="2">
    <location>
        <begin position="10"/>
        <end position="14"/>
    </location>
    <ligand>
        <name>ATP</name>
        <dbReference type="ChEBI" id="CHEBI:30616"/>
    </ligand>
</feature>
<feature type="binding site" evidence="2">
    <location>
        <position position="41"/>
    </location>
    <ligand>
        <name>ATP</name>
        <dbReference type="ChEBI" id="CHEBI:30616"/>
    </ligand>
</feature>
<feature type="binding site" evidence="2">
    <location>
        <begin position="67"/>
        <end position="73"/>
    </location>
    <ligand>
        <name>ATP</name>
        <dbReference type="ChEBI" id="CHEBI:30616"/>
    </ligand>
</feature>
<feature type="binding site" evidence="2">
    <location>
        <position position="94"/>
    </location>
    <ligand>
        <name>ATP</name>
        <dbReference type="ChEBI" id="CHEBI:30616"/>
    </ligand>
</feature>
<feature type="binding site" evidence="1">
    <location>
        <position position="213"/>
    </location>
    <ligand>
        <name>Mg(2+)</name>
        <dbReference type="ChEBI" id="CHEBI:18420"/>
    </ligand>
</feature>
<feature type="binding site" evidence="1">
    <location>
        <position position="216"/>
    </location>
    <ligand>
        <name>Mg(2+)</name>
        <dbReference type="ChEBI" id="CHEBI:18420"/>
    </ligand>
</feature>
<feature type="binding site" evidence="1">
    <location>
        <position position="218"/>
    </location>
    <ligand>
        <name>Mg(2+)</name>
        <dbReference type="ChEBI" id="CHEBI:18420"/>
    </ligand>
</feature>
<reference key="1">
    <citation type="journal article" date="2007" name="PLoS ONE">
        <title>Molecular correlates of host specialization in Staphylococcus aureus.</title>
        <authorList>
            <person name="Herron-Olson L."/>
            <person name="Fitzgerald J.R."/>
            <person name="Musser J.M."/>
            <person name="Kapur V."/>
        </authorList>
    </citation>
    <scope>NUCLEOTIDE SEQUENCE [LARGE SCALE GENOMIC DNA]</scope>
    <source>
        <strain>bovine RF122 / ET3-1</strain>
    </source>
</reference>
<name>DAGK_STAAB</name>
<protein>
    <recommendedName>
        <fullName>Diacylglycerol kinase</fullName>
        <shortName>DAG kinase</shortName>
        <shortName>DAGK</shortName>
        <ecNumber evidence="1">2.7.1.107</ecNumber>
    </recommendedName>
</protein>
<keyword id="KW-0067">ATP-binding</keyword>
<keyword id="KW-0418">Kinase</keyword>
<keyword id="KW-0444">Lipid biosynthesis</keyword>
<keyword id="KW-0443">Lipid metabolism</keyword>
<keyword id="KW-0460">Magnesium</keyword>
<keyword id="KW-0479">Metal-binding</keyword>
<keyword id="KW-0547">Nucleotide-binding</keyword>
<keyword id="KW-0594">Phospholipid biosynthesis</keyword>
<keyword id="KW-1208">Phospholipid metabolism</keyword>
<keyword id="KW-0808">Transferase</keyword>
<gene>
    <name type="primary">dagK</name>
    <name type="ordered locus">SAB1830c</name>
</gene>
<proteinExistence type="inferred from homology"/>
<organism>
    <name type="scientific">Staphylococcus aureus (strain bovine RF122 / ET3-1)</name>
    <dbReference type="NCBI Taxonomy" id="273036"/>
    <lineage>
        <taxon>Bacteria</taxon>
        <taxon>Bacillati</taxon>
        <taxon>Bacillota</taxon>
        <taxon>Bacilli</taxon>
        <taxon>Bacillales</taxon>
        <taxon>Staphylococcaceae</taxon>
        <taxon>Staphylococcus</taxon>
    </lineage>
</organism>
<dbReference type="EC" id="2.7.1.107" evidence="1"/>
<dbReference type="EMBL" id="AJ938182">
    <property type="protein sequence ID" value="CAI81519.1"/>
    <property type="molecule type" value="Genomic_DNA"/>
</dbReference>
<dbReference type="RefSeq" id="WP_001231460.1">
    <property type="nucleotide sequence ID" value="NC_007622.1"/>
</dbReference>
<dbReference type="SMR" id="Q2YU29"/>
<dbReference type="KEGG" id="sab:SAB1830c"/>
<dbReference type="HOGENOM" id="CLU_045532_1_0_9"/>
<dbReference type="GO" id="GO:0005886">
    <property type="term" value="C:plasma membrane"/>
    <property type="evidence" value="ECO:0007669"/>
    <property type="project" value="TreeGrafter"/>
</dbReference>
<dbReference type="GO" id="GO:0005524">
    <property type="term" value="F:ATP binding"/>
    <property type="evidence" value="ECO:0007669"/>
    <property type="project" value="UniProtKB-KW"/>
</dbReference>
<dbReference type="GO" id="GO:0004143">
    <property type="term" value="F:ATP-dependent diacylglycerol kinase activity"/>
    <property type="evidence" value="ECO:0007669"/>
    <property type="project" value="UniProtKB-EC"/>
</dbReference>
<dbReference type="GO" id="GO:0046872">
    <property type="term" value="F:metal ion binding"/>
    <property type="evidence" value="ECO:0007669"/>
    <property type="project" value="UniProtKB-KW"/>
</dbReference>
<dbReference type="GO" id="GO:0008654">
    <property type="term" value="P:phospholipid biosynthetic process"/>
    <property type="evidence" value="ECO:0007669"/>
    <property type="project" value="UniProtKB-KW"/>
</dbReference>
<dbReference type="FunFam" id="2.60.200.40:FF:000015">
    <property type="entry name" value="Diacylglycerol kinase"/>
    <property type="match status" value="1"/>
</dbReference>
<dbReference type="FunFam" id="3.40.50.10330:FF:000008">
    <property type="entry name" value="Probable lipid kinase YegS"/>
    <property type="match status" value="1"/>
</dbReference>
<dbReference type="Gene3D" id="2.60.200.40">
    <property type="match status" value="1"/>
</dbReference>
<dbReference type="Gene3D" id="3.40.50.10330">
    <property type="entry name" value="Probable inorganic polyphosphate/atp-NAD kinase, domain 1"/>
    <property type="match status" value="1"/>
</dbReference>
<dbReference type="InterPro" id="IPR017438">
    <property type="entry name" value="ATP-NAD_kinase_N"/>
</dbReference>
<dbReference type="InterPro" id="IPR005218">
    <property type="entry name" value="Diacylglycerol/lipid_kinase"/>
</dbReference>
<dbReference type="InterPro" id="IPR001206">
    <property type="entry name" value="Diacylglycerol_kinase_cat_dom"/>
</dbReference>
<dbReference type="InterPro" id="IPR050187">
    <property type="entry name" value="Lipid_Phosphate_FormReg"/>
</dbReference>
<dbReference type="InterPro" id="IPR016064">
    <property type="entry name" value="NAD/diacylglycerol_kinase_sf"/>
</dbReference>
<dbReference type="InterPro" id="IPR045540">
    <property type="entry name" value="YegS/DAGK_C"/>
</dbReference>
<dbReference type="NCBIfam" id="NF009603">
    <property type="entry name" value="PRK13055.1"/>
    <property type="match status" value="1"/>
</dbReference>
<dbReference type="NCBIfam" id="NF009874">
    <property type="entry name" value="PRK13337.1"/>
    <property type="match status" value="1"/>
</dbReference>
<dbReference type="NCBIfam" id="TIGR00147">
    <property type="entry name" value="YegS/Rv2252/BmrU family lipid kinase"/>
    <property type="match status" value="1"/>
</dbReference>
<dbReference type="PANTHER" id="PTHR12358:SF106">
    <property type="entry name" value="LIPID KINASE YEGS"/>
    <property type="match status" value="1"/>
</dbReference>
<dbReference type="PANTHER" id="PTHR12358">
    <property type="entry name" value="SPHINGOSINE KINASE"/>
    <property type="match status" value="1"/>
</dbReference>
<dbReference type="Pfam" id="PF00781">
    <property type="entry name" value="DAGK_cat"/>
    <property type="match status" value="1"/>
</dbReference>
<dbReference type="Pfam" id="PF19279">
    <property type="entry name" value="YegS_C"/>
    <property type="match status" value="1"/>
</dbReference>
<dbReference type="SMART" id="SM00046">
    <property type="entry name" value="DAGKc"/>
    <property type="match status" value="1"/>
</dbReference>
<dbReference type="SUPFAM" id="SSF111331">
    <property type="entry name" value="NAD kinase/diacylglycerol kinase-like"/>
    <property type="match status" value="1"/>
</dbReference>
<dbReference type="PROSITE" id="PS50146">
    <property type="entry name" value="DAGK"/>
    <property type="match status" value="1"/>
</dbReference>
<comment type="function">
    <text evidence="1">Catalyzes the phosphorylation of diacylglycerol (DAG) into phosphatidic acid. Is a key enzyme involved in the production of lipoteichoic acid by reintroducing DAG formed from the breakdown of membrane phospholipids into the phosphatidylglycerol biosynthetic pathway.</text>
</comment>
<comment type="catalytic activity">
    <reaction evidence="1">
        <text>a 1,2-diacyl-sn-glycerol + ATP = a 1,2-diacyl-sn-glycero-3-phosphate + ADP + H(+)</text>
        <dbReference type="Rhea" id="RHEA:10272"/>
        <dbReference type="ChEBI" id="CHEBI:15378"/>
        <dbReference type="ChEBI" id="CHEBI:17815"/>
        <dbReference type="ChEBI" id="CHEBI:30616"/>
        <dbReference type="ChEBI" id="CHEBI:58608"/>
        <dbReference type="ChEBI" id="CHEBI:456216"/>
        <dbReference type="EC" id="2.7.1.107"/>
    </reaction>
</comment>
<comment type="cofactor">
    <cofactor evidence="1">
        <name>Mg(2+)</name>
        <dbReference type="ChEBI" id="CHEBI:18420"/>
    </cofactor>
    <text evidence="1">Binds 1 Mg(2+) ion per subunit. This ion appears to have a structural role and is required for catalytic activity.</text>
</comment>
<comment type="subunit">
    <text evidence="1">Homodimer.</text>
</comment>
<comment type="similarity">
    <text evidence="3">Belongs to the diacylglycerol/lipid kinase family.</text>
</comment>
<accession>Q2YU29</accession>
<evidence type="ECO:0000250" key="1">
    <source>
        <dbReference type="UniProtKB" id="Q6GFF9"/>
    </source>
</evidence>
<evidence type="ECO:0000255" key="2">
    <source>
        <dbReference type="PROSITE-ProRule" id="PRU00783"/>
    </source>
</evidence>
<evidence type="ECO:0000305" key="3"/>